<gene>
    <name type="ordered locus">VNG_1595C</name>
</gene>
<sequence length="309" mass="32696">MTGTAPVSRRQYLGTAGAIIGTTAGCLTGADASIHVLAAGSLTSTIEDHIRPAFEDATDHTLRPEYHGSTTLLQLISDGTKHPDVAISADATLLRTRLFDAHADWALEFASNRLGICYVPSTPLGRRLAAGTPWWRAAVDAAPDTIAVSDPALDPLGYRTLMAFTLAATAHDAPDLRADLDPATVTKPSESQLLADVETGNHAAAVVYENMALDHDLPFLGFPDAYNFAAPERADHYASATYTTDDGTRIHGRPITYATTVLNDASNTAGGRAFVRFLAANPDMVRDAGLAVPESLPTHQGALPDALER</sequence>
<organism>
    <name type="scientific">Halobacterium salinarum (strain ATCC 700922 / JCM 11081 / NRC-1)</name>
    <name type="common">Halobacterium halobium</name>
    <dbReference type="NCBI Taxonomy" id="64091"/>
    <lineage>
        <taxon>Archaea</taxon>
        <taxon>Methanobacteriati</taxon>
        <taxon>Methanobacteriota</taxon>
        <taxon>Stenosarchaea group</taxon>
        <taxon>Halobacteria</taxon>
        <taxon>Halobacteriales</taxon>
        <taxon>Halobacteriaceae</taxon>
        <taxon>Halobacterium</taxon>
        <taxon>Halobacterium salinarum NRC-34001</taxon>
    </lineage>
</organism>
<comment type="PTM">
    <text>Predicted to be exported by the Tat system. The position of the signal peptide cleavage has not been experimentally proven.</text>
</comment>
<comment type="similarity">
    <text evidence="2">Belongs to the bacterial solute-binding protein 1 family. WtpA subfamily.</text>
</comment>
<keyword id="KW-1185">Reference proteome</keyword>
<keyword id="KW-0732">Signal</keyword>
<protein>
    <recommendedName>
        <fullName>Uncharacterized solute-binding protein VNG_1595C</fullName>
    </recommendedName>
</protein>
<accession>Q9HPK2</accession>
<proteinExistence type="inferred from homology"/>
<name>Y1595_HALSA</name>
<reference key="1">
    <citation type="journal article" date="2000" name="Proc. Natl. Acad. Sci. U.S.A.">
        <title>Genome sequence of Halobacterium species NRC-1.</title>
        <authorList>
            <person name="Ng W.V."/>
            <person name="Kennedy S.P."/>
            <person name="Mahairas G.G."/>
            <person name="Berquist B."/>
            <person name="Pan M."/>
            <person name="Shukla H.D."/>
            <person name="Lasky S.R."/>
            <person name="Baliga N.S."/>
            <person name="Thorsson V."/>
            <person name="Sbrogna J."/>
            <person name="Swartzell S."/>
            <person name="Weir D."/>
            <person name="Hall J."/>
            <person name="Dahl T.A."/>
            <person name="Welti R."/>
            <person name="Goo Y.A."/>
            <person name="Leithauser B."/>
            <person name="Keller K."/>
            <person name="Cruz R."/>
            <person name="Danson M.J."/>
            <person name="Hough D.W."/>
            <person name="Maddocks D.G."/>
            <person name="Jablonski P.E."/>
            <person name="Krebs M.P."/>
            <person name="Angevine C.M."/>
            <person name="Dale H."/>
            <person name="Isenbarger T.A."/>
            <person name="Peck R.F."/>
            <person name="Pohlschroder M."/>
            <person name="Spudich J.L."/>
            <person name="Jung K.-H."/>
            <person name="Alam M."/>
            <person name="Freitas T."/>
            <person name="Hou S."/>
            <person name="Daniels C.J."/>
            <person name="Dennis P.P."/>
            <person name="Omer A.D."/>
            <person name="Ebhardt H."/>
            <person name="Lowe T.M."/>
            <person name="Liang P."/>
            <person name="Riley M."/>
            <person name="Hood L."/>
            <person name="DasSarma S."/>
        </authorList>
    </citation>
    <scope>NUCLEOTIDE SEQUENCE [LARGE SCALE GENOMIC DNA]</scope>
    <source>
        <strain>ATCC 700922 / JCM 11081 / NRC-1</strain>
    </source>
</reference>
<feature type="signal peptide" description="Tat-type signal" evidence="1">
    <location>
        <begin position="1"/>
        <end position="32"/>
    </location>
</feature>
<feature type="chain" id="PRO_0000159718" description="Uncharacterized solute-binding protein VNG_1595C">
    <location>
        <begin position="33"/>
        <end position="309"/>
    </location>
</feature>
<evidence type="ECO:0000255" key="1">
    <source>
        <dbReference type="PROSITE-ProRule" id="PRU00648"/>
    </source>
</evidence>
<evidence type="ECO:0000305" key="2"/>
<dbReference type="EMBL" id="AE004437">
    <property type="protein sequence ID" value="AAG19865.1"/>
    <property type="molecule type" value="Genomic_DNA"/>
</dbReference>
<dbReference type="PIR" id="E84312">
    <property type="entry name" value="E84312"/>
</dbReference>
<dbReference type="RefSeq" id="WP_010903163.1">
    <property type="nucleotide sequence ID" value="NC_002607.1"/>
</dbReference>
<dbReference type="SMR" id="Q9HPK2"/>
<dbReference type="STRING" id="64091.VNG_1595C"/>
<dbReference type="PaxDb" id="64091-VNG_1595C"/>
<dbReference type="KEGG" id="hal:VNG_1595C"/>
<dbReference type="PATRIC" id="fig|64091.14.peg.1218"/>
<dbReference type="HOGENOM" id="CLU_055936_2_0_2"/>
<dbReference type="InParanoid" id="Q9HPK2"/>
<dbReference type="OrthoDB" id="7820at2157"/>
<dbReference type="PhylomeDB" id="Q9HPK2"/>
<dbReference type="Proteomes" id="UP000000554">
    <property type="component" value="Chromosome"/>
</dbReference>
<dbReference type="GO" id="GO:0030973">
    <property type="term" value="F:molybdate ion binding"/>
    <property type="evidence" value="ECO:0000318"/>
    <property type="project" value="GO_Central"/>
</dbReference>
<dbReference type="GO" id="GO:0015689">
    <property type="term" value="P:molybdate ion transport"/>
    <property type="evidence" value="ECO:0000318"/>
    <property type="project" value="GO_Central"/>
</dbReference>
<dbReference type="CDD" id="cd13540">
    <property type="entry name" value="PBP2_ModA_WtpA"/>
    <property type="match status" value="1"/>
</dbReference>
<dbReference type="Gene3D" id="3.40.190.10">
    <property type="entry name" value="Periplasmic binding protein-like II"/>
    <property type="match status" value="4"/>
</dbReference>
<dbReference type="InterPro" id="IPR050682">
    <property type="entry name" value="ModA/WtpA"/>
</dbReference>
<dbReference type="InterPro" id="IPR006311">
    <property type="entry name" value="TAT_signal"/>
</dbReference>
<dbReference type="PANTHER" id="PTHR30632">
    <property type="entry name" value="MOLYBDATE-BINDING PERIPLASMIC PROTEIN"/>
    <property type="match status" value="1"/>
</dbReference>
<dbReference type="PANTHER" id="PTHR30632:SF16">
    <property type="entry name" value="MOLYBDATE_TUNGSTATE-BINDING PROTEIN WTPA"/>
    <property type="match status" value="1"/>
</dbReference>
<dbReference type="Pfam" id="PF13531">
    <property type="entry name" value="SBP_bac_11"/>
    <property type="match status" value="1"/>
</dbReference>
<dbReference type="SUPFAM" id="SSF53850">
    <property type="entry name" value="Periplasmic binding protein-like II"/>
    <property type="match status" value="1"/>
</dbReference>
<dbReference type="PROSITE" id="PS51318">
    <property type="entry name" value="TAT"/>
    <property type="match status" value="1"/>
</dbReference>